<reference key="1">
    <citation type="journal article" date="2011" name="MBio">
        <title>Novel metabolic attributes of the genus Cyanothece, comprising a group of unicellular nitrogen-fixing Cyanobacteria.</title>
        <authorList>
            <person name="Bandyopadhyay A."/>
            <person name="Elvitigala T."/>
            <person name="Welsh E."/>
            <person name="Stockel J."/>
            <person name="Liberton M."/>
            <person name="Min H."/>
            <person name="Sherman L.A."/>
            <person name="Pakrasi H.B."/>
        </authorList>
    </citation>
    <scope>NUCLEOTIDE SEQUENCE [LARGE SCALE GENOMIC DNA]</scope>
    <source>
        <strain>PCC 8801 / RF-1</strain>
    </source>
</reference>
<feature type="chain" id="PRO_1000125635" description="Aminomethyltransferase">
    <location>
        <begin position="1"/>
        <end position="369"/>
    </location>
</feature>
<evidence type="ECO:0000255" key="1">
    <source>
        <dbReference type="HAMAP-Rule" id="MF_00259"/>
    </source>
</evidence>
<dbReference type="EC" id="2.1.2.10" evidence="1"/>
<dbReference type="EMBL" id="CP001287">
    <property type="protein sequence ID" value="ACK67774.1"/>
    <property type="molecule type" value="Genomic_DNA"/>
</dbReference>
<dbReference type="RefSeq" id="WP_012597032.1">
    <property type="nucleotide sequence ID" value="NC_011726.1"/>
</dbReference>
<dbReference type="SMR" id="B7K468"/>
<dbReference type="STRING" id="41431.PCC8801_3824"/>
<dbReference type="KEGG" id="cyp:PCC8801_3824"/>
<dbReference type="eggNOG" id="COG0404">
    <property type="taxonomic scope" value="Bacteria"/>
</dbReference>
<dbReference type="HOGENOM" id="CLU_007884_10_2_3"/>
<dbReference type="OrthoDB" id="9774591at2"/>
<dbReference type="Proteomes" id="UP000008204">
    <property type="component" value="Chromosome"/>
</dbReference>
<dbReference type="GO" id="GO:0005829">
    <property type="term" value="C:cytosol"/>
    <property type="evidence" value="ECO:0007669"/>
    <property type="project" value="TreeGrafter"/>
</dbReference>
<dbReference type="GO" id="GO:0005960">
    <property type="term" value="C:glycine cleavage complex"/>
    <property type="evidence" value="ECO:0007669"/>
    <property type="project" value="InterPro"/>
</dbReference>
<dbReference type="GO" id="GO:0004047">
    <property type="term" value="F:aminomethyltransferase activity"/>
    <property type="evidence" value="ECO:0007669"/>
    <property type="project" value="UniProtKB-UniRule"/>
</dbReference>
<dbReference type="GO" id="GO:0008483">
    <property type="term" value="F:transaminase activity"/>
    <property type="evidence" value="ECO:0007669"/>
    <property type="project" value="UniProtKB-KW"/>
</dbReference>
<dbReference type="GO" id="GO:0019464">
    <property type="term" value="P:glycine decarboxylation via glycine cleavage system"/>
    <property type="evidence" value="ECO:0007669"/>
    <property type="project" value="UniProtKB-UniRule"/>
</dbReference>
<dbReference type="FunFam" id="2.40.30.110:FF:000003">
    <property type="entry name" value="Aminomethyltransferase"/>
    <property type="match status" value="1"/>
</dbReference>
<dbReference type="FunFam" id="3.30.70.1400:FF:000001">
    <property type="entry name" value="Aminomethyltransferase"/>
    <property type="match status" value="1"/>
</dbReference>
<dbReference type="FunFam" id="4.10.1250.10:FF:000001">
    <property type="entry name" value="Aminomethyltransferase"/>
    <property type="match status" value="1"/>
</dbReference>
<dbReference type="Gene3D" id="2.40.30.110">
    <property type="entry name" value="Aminomethyltransferase beta-barrel domains"/>
    <property type="match status" value="1"/>
</dbReference>
<dbReference type="Gene3D" id="3.30.70.1400">
    <property type="entry name" value="Aminomethyltransferase beta-barrel domains"/>
    <property type="match status" value="1"/>
</dbReference>
<dbReference type="Gene3D" id="4.10.1250.10">
    <property type="entry name" value="Aminomethyltransferase fragment"/>
    <property type="match status" value="1"/>
</dbReference>
<dbReference type="Gene3D" id="3.30.1360.120">
    <property type="entry name" value="Probable tRNA modification gtpase trme, domain 1"/>
    <property type="match status" value="1"/>
</dbReference>
<dbReference type="HAMAP" id="MF_00259">
    <property type="entry name" value="GcvT"/>
    <property type="match status" value="1"/>
</dbReference>
<dbReference type="InterPro" id="IPR006223">
    <property type="entry name" value="GCS_T"/>
</dbReference>
<dbReference type="InterPro" id="IPR022903">
    <property type="entry name" value="GCS_T_bac"/>
</dbReference>
<dbReference type="InterPro" id="IPR013977">
    <property type="entry name" value="GCST_C"/>
</dbReference>
<dbReference type="InterPro" id="IPR006222">
    <property type="entry name" value="GCV_T_N"/>
</dbReference>
<dbReference type="InterPro" id="IPR028896">
    <property type="entry name" value="GcvT/YgfZ/DmdA"/>
</dbReference>
<dbReference type="InterPro" id="IPR029043">
    <property type="entry name" value="GcvT/YgfZ_C"/>
</dbReference>
<dbReference type="InterPro" id="IPR027266">
    <property type="entry name" value="TrmE/GcvT_dom1"/>
</dbReference>
<dbReference type="NCBIfam" id="TIGR00528">
    <property type="entry name" value="gcvT"/>
    <property type="match status" value="1"/>
</dbReference>
<dbReference type="NCBIfam" id="NF001567">
    <property type="entry name" value="PRK00389.1"/>
    <property type="match status" value="1"/>
</dbReference>
<dbReference type="PANTHER" id="PTHR43757">
    <property type="entry name" value="AMINOMETHYLTRANSFERASE"/>
    <property type="match status" value="1"/>
</dbReference>
<dbReference type="PANTHER" id="PTHR43757:SF2">
    <property type="entry name" value="AMINOMETHYLTRANSFERASE, MITOCHONDRIAL"/>
    <property type="match status" value="1"/>
</dbReference>
<dbReference type="Pfam" id="PF01571">
    <property type="entry name" value="GCV_T"/>
    <property type="match status" value="1"/>
</dbReference>
<dbReference type="Pfam" id="PF08669">
    <property type="entry name" value="GCV_T_C"/>
    <property type="match status" value="1"/>
</dbReference>
<dbReference type="PIRSF" id="PIRSF006487">
    <property type="entry name" value="GcvT"/>
    <property type="match status" value="1"/>
</dbReference>
<dbReference type="SUPFAM" id="SSF101790">
    <property type="entry name" value="Aminomethyltransferase beta-barrel domain"/>
    <property type="match status" value="1"/>
</dbReference>
<dbReference type="SUPFAM" id="SSF103025">
    <property type="entry name" value="Folate-binding domain"/>
    <property type="match status" value="1"/>
</dbReference>
<comment type="function">
    <text evidence="1">The glycine cleavage system catalyzes the degradation of glycine.</text>
</comment>
<comment type="catalytic activity">
    <reaction evidence="1">
        <text>N(6)-[(R)-S(8)-aminomethyldihydrolipoyl]-L-lysyl-[protein] + (6S)-5,6,7,8-tetrahydrofolate = N(6)-[(R)-dihydrolipoyl]-L-lysyl-[protein] + (6R)-5,10-methylene-5,6,7,8-tetrahydrofolate + NH4(+)</text>
        <dbReference type="Rhea" id="RHEA:16945"/>
        <dbReference type="Rhea" id="RHEA-COMP:10475"/>
        <dbReference type="Rhea" id="RHEA-COMP:10492"/>
        <dbReference type="ChEBI" id="CHEBI:15636"/>
        <dbReference type="ChEBI" id="CHEBI:28938"/>
        <dbReference type="ChEBI" id="CHEBI:57453"/>
        <dbReference type="ChEBI" id="CHEBI:83100"/>
        <dbReference type="ChEBI" id="CHEBI:83143"/>
        <dbReference type="EC" id="2.1.2.10"/>
    </reaction>
</comment>
<comment type="subunit">
    <text evidence="1">The glycine cleavage system is composed of four proteins: P, T, L and H.</text>
</comment>
<comment type="similarity">
    <text evidence="1">Belongs to the GcvT family.</text>
</comment>
<protein>
    <recommendedName>
        <fullName evidence="1">Aminomethyltransferase</fullName>
        <ecNumber evidence="1">2.1.2.10</ecNumber>
    </recommendedName>
    <alternativeName>
        <fullName evidence="1">Glycine cleavage system T protein</fullName>
    </alternativeName>
</protein>
<gene>
    <name evidence="1" type="primary">gcvT</name>
    <name type="ordered locus">PCC8801_3824</name>
</gene>
<accession>B7K468</accession>
<name>GCST_RIPO1</name>
<proteinExistence type="inferred from homology"/>
<keyword id="KW-0032">Aminotransferase</keyword>
<keyword id="KW-1185">Reference proteome</keyword>
<keyword id="KW-0808">Transferase</keyword>
<sequence>MSNLLRTPLFDLIVQQKAKLTEFSGWEMPVQFSKLKDEHQAVRTDVGMFDISHMGKFALQGTELLKSLQFLVPSDLERLQPGQAQYTVLLNPQGGIIDDIIVYYQGITETGEQRANIIVNAGTTEKDKTWLLSHLDTQKITFKDLSGEKVLIAVQGPQSVAKLQAFVQEDLSQVGFFGHFEGTVLTKPAFIARTGYTGEDGFEVMVDPEVGQDLWRSLFQAGVTPCGLGARDTLRLEAAMCLYSQDIDDNTTPLEAGLNWLVHLDSKGDFIGRDILEKQKAQGVERRLVGLQMEGRHIARHGYPVLYEGKIVGEVTSGTLPPTVGKAIALAYVPRSLGKVGTPLEVEIRGQNCQAIVVKKPFYRSPNRF</sequence>
<organism>
    <name type="scientific">Rippkaea orientalis (strain PCC 8801 / RF-1)</name>
    <name type="common">Cyanothece sp. (strain PCC 8801)</name>
    <dbReference type="NCBI Taxonomy" id="41431"/>
    <lineage>
        <taxon>Bacteria</taxon>
        <taxon>Bacillati</taxon>
        <taxon>Cyanobacteriota</taxon>
        <taxon>Cyanophyceae</taxon>
        <taxon>Oscillatoriophycideae</taxon>
        <taxon>Chroococcales</taxon>
        <taxon>Aphanothecaceae</taxon>
        <taxon>Rippkaea</taxon>
        <taxon>Rippkaea orientalis</taxon>
    </lineage>
</organism>